<proteinExistence type="inferred from homology"/>
<name>IOLD_HALH5</name>
<feature type="chain" id="PRO_0000352533" description="3D-(3,5/4)-trihydroxycyclohexane-1,2-dione hydrolase">
    <location>
        <begin position="1"/>
        <end position="637"/>
    </location>
</feature>
<feature type="region of interest" description="Thiamine pyrophosphate binding" evidence="1">
    <location>
        <begin position="441"/>
        <end position="521"/>
    </location>
</feature>
<feature type="binding site" evidence="1">
    <location>
        <position position="65"/>
    </location>
    <ligand>
        <name>thiamine diphosphate</name>
        <dbReference type="ChEBI" id="CHEBI:58937"/>
    </ligand>
</feature>
<feature type="binding site" evidence="1">
    <location>
        <position position="492"/>
    </location>
    <ligand>
        <name>Mg(2+)</name>
        <dbReference type="ChEBI" id="CHEBI:18420"/>
    </ligand>
</feature>
<feature type="binding site" evidence="1">
    <location>
        <position position="519"/>
    </location>
    <ligand>
        <name>Mg(2+)</name>
        <dbReference type="ChEBI" id="CHEBI:18420"/>
    </ligand>
</feature>
<accession>Q9KAG9</accession>
<reference key="1">
    <citation type="journal article" date="2000" name="Nucleic Acids Res.">
        <title>Complete genome sequence of the alkaliphilic bacterium Bacillus halodurans and genomic sequence comparison with Bacillus subtilis.</title>
        <authorList>
            <person name="Takami H."/>
            <person name="Nakasone K."/>
            <person name="Takaki Y."/>
            <person name="Maeno G."/>
            <person name="Sasaki R."/>
            <person name="Masui N."/>
            <person name="Fuji F."/>
            <person name="Hirama C."/>
            <person name="Nakamura Y."/>
            <person name="Ogasawara N."/>
            <person name="Kuhara S."/>
            <person name="Horikoshi K."/>
        </authorList>
    </citation>
    <scope>NUCLEOTIDE SEQUENCE [LARGE SCALE GENOMIC DNA]</scope>
    <source>
        <strain>ATCC BAA-125 / DSM 18197 / FERM 7344 / JCM 9153 / C-125</strain>
    </source>
</reference>
<sequence length="637" mass="70729">METIRLTTAQALIKFLNQQYVHSDGEEFPFVEGIFNIFGHGNVLGIGHALEQDPGHLKVYQGKNEQGMAHTAIAYSKQMLRKKIYAITTSSGPGSANLVTAAATALANQIPILLLPADTYATRQPDPVLQQFEQEQSIAITTNDALQPVSRYWDRITRPEQLMSSLIRAFEVMTDPAKAGPATICISQDVEGEAFDYDVRFFEKRVHYIDRKLPSERELKGAADLIKKSKRPLLVVGGGAKYSEAREALIAFSETFNVPLTETQAGKSAVEASFKNNLGGLGITGTLAANKAAQQADLVIGIGTRFTDFATSSKTLFDFEKVKFVNINVSRMQAYKLDAFPVVADAKRTLEALVPMLEGYKSEYGDDIGQLKAEWLKERERLGKVTFDRERFEPEIKGHFTQEVMNEYADALQTEFAQTTALLTINETIDPDSVIICAAGSLPGDLQRLWHAEVPNTYHLEYGYSCMGYEVSGTLGLKLAEPNKEVYAIVGDGSFLMLHSELVTAIQYHKKINVLLFDNSGYGCINNLQMDFGGGSYFCEFRTADEKILHVDYAKVAEGYGAKSYRVSTVEELKAALEDAKKQECSTLIDIKVLPKTMTDGYDGSWWNLGVSEVSDREGIQKAYELKQEKLTRAKQY</sequence>
<organism>
    <name type="scientific">Halalkalibacterium halodurans (strain ATCC BAA-125 / DSM 18197 / FERM 7344 / JCM 9153 / C-125)</name>
    <name type="common">Bacillus halodurans</name>
    <dbReference type="NCBI Taxonomy" id="272558"/>
    <lineage>
        <taxon>Bacteria</taxon>
        <taxon>Bacillati</taxon>
        <taxon>Bacillota</taxon>
        <taxon>Bacilli</taxon>
        <taxon>Bacillales</taxon>
        <taxon>Bacillaceae</taxon>
        <taxon>Halalkalibacterium (ex Joshi et al. 2022)</taxon>
    </lineage>
</organism>
<keyword id="KW-0378">Hydrolase</keyword>
<keyword id="KW-0460">Magnesium</keyword>
<keyword id="KW-0479">Metal-binding</keyword>
<keyword id="KW-0520">NAD</keyword>
<keyword id="KW-1185">Reference proteome</keyword>
<keyword id="KW-0786">Thiamine pyrophosphate</keyword>
<gene>
    <name evidence="1" type="primary">iolD</name>
    <name type="ordered locus">BH2318</name>
</gene>
<protein>
    <recommendedName>
        <fullName evidence="1">3D-(3,5/4)-trihydroxycyclohexane-1,2-dione hydrolase</fullName>
        <shortName evidence="1">THcHDO hydrolase</shortName>
        <ecNumber evidence="1">3.7.1.22</ecNumber>
    </recommendedName>
</protein>
<comment type="function">
    <text evidence="1">Involved in the cleavage of the C1-C2 bond of 3D-(3,5/4)-trihydroxycyclohexane-1,2-dione (THcHDO) to yield 5-deoxy-glucuronate (5DG).</text>
</comment>
<comment type="catalytic activity">
    <reaction evidence="1">
        <text>3D-3,5/4-trihydroxycyclohexane-1,2-dione + H2O = 5-deoxy-D-glucuronate + H(+)</text>
        <dbReference type="Rhea" id="RHEA:25836"/>
        <dbReference type="ChEBI" id="CHEBI:15377"/>
        <dbReference type="ChEBI" id="CHEBI:15378"/>
        <dbReference type="ChEBI" id="CHEBI:28446"/>
        <dbReference type="ChEBI" id="CHEBI:58852"/>
        <dbReference type="EC" id="3.7.1.22"/>
    </reaction>
</comment>
<comment type="cofactor">
    <cofactor evidence="1">
        <name>Mg(2+)</name>
        <dbReference type="ChEBI" id="CHEBI:18420"/>
    </cofactor>
    <text evidence="1">Binds 1 Mg(2+) ion per subunit.</text>
</comment>
<comment type="cofactor">
    <cofactor evidence="1">
        <name>thiamine diphosphate</name>
        <dbReference type="ChEBI" id="CHEBI:58937"/>
    </cofactor>
    <text evidence="1">Binds 1 thiamine pyrophosphate per subunit.</text>
</comment>
<comment type="pathway">
    <text evidence="1">Polyol metabolism; myo-inositol degradation into acetyl-CoA; acetyl-CoA from myo-inositol: step 3/7.</text>
</comment>
<comment type="similarity">
    <text evidence="1">Belongs to the TPP enzyme family.</text>
</comment>
<dbReference type="EC" id="3.7.1.22" evidence="1"/>
<dbReference type="EMBL" id="BA000004">
    <property type="protein sequence ID" value="BAB06037.1"/>
    <property type="molecule type" value="Genomic_DNA"/>
</dbReference>
<dbReference type="PIR" id="F83939">
    <property type="entry name" value="F83939"/>
</dbReference>
<dbReference type="RefSeq" id="WP_010898474.1">
    <property type="nucleotide sequence ID" value="NC_002570.2"/>
</dbReference>
<dbReference type="SMR" id="Q9KAG9"/>
<dbReference type="STRING" id="272558.gene:10728216"/>
<dbReference type="KEGG" id="bha:BH2318"/>
<dbReference type="eggNOG" id="COG3962">
    <property type="taxonomic scope" value="Bacteria"/>
</dbReference>
<dbReference type="HOGENOM" id="CLU_013748_6_0_9"/>
<dbReference type="OrthoDB" id="4494979at2"/>
<dbReference type="UniPathway" id="UPA00076">
    <property type="reaction ID" value="UER00145"/>
</dbReference>
<dbReference type="Proteomes" id="UP000001258">
    <property type="component" value="Chromosome"/>
</dbReference>
<dbReference type="GO" id="GO:0005948">
    <property type="term" value="C:acetolactate synthase complex"/>
    <property type="evidence" value="ECO:0007669"/>
    <property type="project" value="TreeGrafter"/>
</dbReference>
<dbReference type="GO" id="GO:0102481">
    <property type="term" value="F:3D-(3,5/4)-trihydroxycyclohexane-1,2-dione hydrolase activity"/>
    <property type="evidence" value="ECO:0007669"/>
    <property type="project" value="UniProtKB-EC"/>
</dbReference>
<dbReference type="GO" id="GO:0003984">
    <property type="term" value="F:acetolactate synthase activity"/>
    <property type="evidence" value="ECO:0007669"/>
    <property type="project" value="TreeGrafter"/>
</dbReference>
<dbReference type="GO" id="GO:0050660">
    <property type="term" value="F:flavin adenine dinucleotide binding"/>
    <property type="evidence" value="ECO:0007669"/>
    <property type="project" value="TreeGrafter"/>
</dbReference>
<dbReference type="GO" id="GO:0000287">
    <property type="term" value="F:magnesium ion binding"/>
    <property type="evidence" value="ECO:0007669"/>
    <property type="project" value="UniProtKB-UniRule"/>
</dbReference>
<dbReference type="GO" id="GO:0030976">
    <property type="term" value="F:thiamine pyrophosphate binding"/>
    <property type="evidence" value="ECO:0007669"/>
    <property type="project" value="UniProtKB-UniRule"/>
</dbReference>
<dbReference type="GO" id="GO:0019310">
    <property type="term" value="P:inositol catabolic process"/>
    <property type="evidence" value="ECO:0007669"/>
    <property type="project" value="UniProtKB-UniRule"/>
</dbReference>
<dbReference type="GO" id="GO:0009097">
    <property type="term" value="P:isoleucine biosynthetic process"/>
    <property type="evidence" value="ECO:0007669"/>
    <property type="project" value="TreeGrafter"/>
</dbReference>
<dbReference type="GO" id="GO:0009099">
    <property type="term" value="P:L-valine biosynthetic process"/>
    <property type="evidence" value="ECO:0007669"/>
    <property type="project" value="TreeGrafter"/>
</dbReference>
<dbReference type="CDD" id="cd02003">
    <property type="entry name" value="TPP_IolD"/>
    <property type="match status" value="1"/>
</dbReference>
<dbReference type="CDD" id="cd07035">
    <property type="entry name" value="TPP_PYR_POX_like"/>
    <property type="match status" value="1"/>
</dbReference>
<dbReference type="Gene3D" id="3.40.50.970">
    <property type="match status" value="2"/>
</dbReference>
<dbReference type="Gene3D" id="3.40.50.1220">
    <property type="entry name" value="TPP-binding domain"/>
    <property type="match status" value="1"/>
</dbReference>
<dbReference type="HAMAP" id="MF_01669">
    <property type="entry name" value="IolD"/>
    <property type="match status" value="1"/>
</dbReference>
<dbReference type="InterPro" id="IPR029035">
    <property type="entry name" value="DHS-like_NAD/FAD-binding_dom"/>
</dbReference>
<dbReference type="InterPro" id="IPR030817">
    <property type="entry name" value="Myo_inos_IolD"/>
</dbReference>
<dbReference type="InterPro" id="IPR023757">
    <property type="entry name" value="THcHDO_hydrolase_firmi"/>
</dbReference>
<dbReference type="InterPro" id="IPR029061">
    <property type="entry name" value="THDP-binding"/>
</dbReference>
<dbReference type="InterPro" id="IPR012000">
    <property type="entry name" value="Thiamin_PyroP_enz_cen_dom"/>
</dbReference>
<dbReference type="InterPro" id="IPR012001">
    <property type="entry name" value="Thiamin_PyroP_enz_TPP-bd_dom"/>
</dbReference>
<dbReference type="InterPro" id="IPR000399">
    <property type="entry name" value="TPP-bd_CS"/>
</dbReference>
<dbReference type="InterPro" id="IPR045229">
    <property type="entry name" value="TPP_enz"/>
</dbReference>
<dbReference type="InterPro" id="IPR011766">
    <property type="entry name" value="TPP_enzyme_TPP-bd"/>
</dbReference>
<dbReference type="NCBIfam" id="TIGR04377">
    <property type="entry name" value="myo_inos_iolD"/>
    <property type="match status" value="1"/>
</dbReference>
<dbReference type="PANTHER" id="PTHR18968:SF9">
    <property type="entry name" value="3D-(3,5_4)-TRIHYDROXYCYCLOHEXANE-1,2-DIONE HYDROLASE"/>
    <property type="match status" value="1"/>
</dbReference>
<dbReference type="PANTHER" id="PTHR18968">
    <property type="entry name" value="THIAMINE PYROPHOSPHATE ENZYMES"/>
    <property type="match status" value="1"/>
</dbReference>
<dbReference type="Pfam" id="PF02775">
    <property type="entry name" value="TPP_enzyme_C"/>
    <property type="match status" value="1"/>
</dbReference>
<dbReference type="Pfam" id="PF00205">
    <property type="entry name" value="TPP_enzyme_M"/>
    <property type="match status" value="1"/>
</dbReference>
<dbReference type="Pfam" id="PF02776">
    <property type="entry name" value="TPP_enzyme_N"/>
    <property type="match status" value="1"/>
</dbReference>
<dbReference type="SUPFAM" id="SSF52467">
    <property type="entry name" value="DHS-like NAD/FAD-binding domain"/>
    <property type="match status" value="1"/>
</dbReference>
<dbReference type="SUPFAM" id="SSF52518">
    <property type="entry name" value="Thiamin diphosphate-binding fold (THDP-binding)"/>
    <property type="match status" value="2"/>
</dbReference>
<dbReference type="PROSITE" id="PS00187">
    <property type="entry name" value="TPP_ENZYMES"/>
    <property type="match status" value="1"/>
</dbReference>
<evidence type="ECO:0000255" key="1">
    <source>
        <dbReference type="HAMAP-Rule" id="MF_01669"/>
    </source>
</evidence>